<gene>
    <name evidence="1" type="primary">hisB</name>
    <name type="ordered locus">MJ0698</name>
</gene>
<reference key="1">
    <citation type="journal article" date="1996" name="Science">
        <title>Complete genome sequence of the methanogenic archaeon, Methanococcus jannaschii.</title>
        <authorList>
            <person name="Bult C.J."/>
            <person name="White O."/>
            <person name="Olsen G.J."/>
            <person name="Zhou L."/>
            <person name="Fleischmann R.D."/>
            <person name="Sutton G.G."/>
            <person name="Blake J.A."/>
            <person name="FitzGerald L.M."/>
            <person name="Clayton R.A."/>
            <person name="Gocayne J.D."/>
            <person name="Kerlavage A.R."/>
            <person name="Dougherty B.A."/>
            <person name="Tomb J.-F."/>
            <person name="Adams M.D."/>
            <person name="Reich C.I."/>
            <person name="Overbeek R."/>
            <person name="Kirkness E.F."/>
            <person name="Weinstock K.G."/>
            <person name="Merrick J.M."/>
            <person name="Glodek A."/>
            <person name="Scott J.L."/>
            <person name="Geoghagen N.S.M."/>
            <person name="Weidman J.F."/>
            <person name="Fuhrmann J.L."/>
            <person name="Nguyen D."/>
            <person name="Utterback T.R."/>
            <person name="Kelley J.M."/>
            <person name="Peterson J.D."/>
            <person name="Sadow P.W."/>
            <person name="Hanna M.C."/>
            <person name="Cotton M.D."/>
            <person name="Roberts K.M."/>
            <person name="Hurst M.A."/>
            <person name="Kaine B.P."/>
            <person name="Borodovsky M."/>
            <person name="Klenk H.-P."/>
            <person name="Fraser C.M."/>
            <person name="Smith H.O."/>
            <person name="Woese C.R."/>
            <person name="Venter J.C."/>
        </authorList>
    </citation>
    <scope>NUCLEOTIDE SEQUENCE [LARGE SCALE GENOMIC DNA]</scope>
    <source>
        <strain>ATCC 43067 / DSM 2661 / JAL-1 / JCM 10045 / NBRC 100440</strain>
    </source>
</reference>
<name>HIS7_METJA</name>
<sequence>MFGGNMRIFEVMRETKETNIYLKINIDGTGKYKIDTGIPFFDHLLASFAKHGCFDLIVKARGDLEIDDHHTVEDVGICLGLALNQIEKRNIFRFGWAIIPMDDARATVAIDLSGRSYCVGNYEPKREFVGDLATENINHFFESVASYGMLNIHYEVIGKNEHHKAEALFKAFGVALDLATKIDERKGVISTKGEVKL</sequence>
<keyword id="KW-0028">Amino-acid biosynthesis</keyword>
<keyword id="KW-0963">Cytoplasm</keyword>
<keyword id="KW-0368">Histidine biosynthesis</keyword>
<keyword id="KW-0456">Lyase</keyword>
<keyword id="KW-1185">Reference proteome</keyword>
<dbReference type="EC" id="4.2.1.19" evidence="1"/>
<dbReference type="EMBL" id="L77117">
    <property type="protein sequence ID" value="AAB98691.1"/>
    <property type="molecule type" value="Genomic_DNA"/>
</dbReference>
<dbReference type="PIR" id="B64387">
    <property type="entry name" value="B64387"/>
</dbReference>
<dbReference type="SMR" id="Q58109"/>
<dbReference type="FunCoup" id="Q58109">
    <property type="interactions" value="117"/>
</dbReference>
<dbReference type="STRING" id="243232.MJ_0698"/>
<dbReference type="PaxDb" id="243232-MJ_0698"/>
<dbReference type="EnsemblBacteria" id="AAB98691">
    <property type="protein sequence ID" value="AAB98691"/>
    <property type="gene ID" value="MJ_0698"/>
</dbReference>
<dbReference type="KEGG" id="mja:MJ_0698"/>
<dbReference type="eggNOG" id="arCOG04398">
    <property type="taxonomic scope" value="Archaea"/>
</dbReference>
<dbReference type="HOGENOM" id="CLU_044308_2_0_2"/>
<dbReference type="InParanoid" id="Q58109"/>
<dbReference type="PhylomeDB" id="Q58109"/>
<dbReference type="UniPathway" id="UPA00031">
    <property type="reaction ID" value="UER00011"/>
</dbReference>
<dbReference type="Proteomes" id="UP000000805">
    <property type="component" value="Chromosome"/>
</dbReference>
<dbReference type="GO" id="GO:0005737">
    <property type="term" value="C:cytoplasm"/>
    <property type="evidence" value="ECO:0007669"/>
    <property type="project" value="UniProtKB-SubCell"/>
</dbReference>
<dbReference type="GO" id="GO:0004424">
    <property type="term" value="F:imidazoleglycerol-phosphate dehydratase activity"/>
    <property type="evidence" value="ECO:0000318"/>
    <property type="project" value="GO_Central"/>
</dbReference>
<dbReference type="GO" id="GO:0000105">
    <property type="term" value="P:L-histidine biosynthetic process"/>
    <property type="evidence" value="ECO:0000318"/>
    <property type="project" value="GO_Central"/>
</dbReference>
<dbReference type="CDD" id="cd07914">
    <property type="entry name" value="IGPD"/>
    <property type="match status" value="1"/>
</dbReference>
<dbReference type="FunFam" id="3.30.230.40:FF:000001">
    <property type="entry name" value="Imidazoleglycerol-phosphate dehydratase HisB"/>
    <property type="match status" value="1"/>
</dbReference>
<dbReference type="FunFam" id="3.30.230.40:FF:000003">
    <property type="entry name" value="Imidazoleglycerol-phosphate dehydratase HisB"/>
    <property type="match status" value="1"/>
</dbReference>
<dbReference type="Gene3D" id="3.30.230.40">
    <property type="entry name" value="Imidazole glycerol phosphate dehydratase, domain 1"/>
    <property type="match status" value="2"/>
</dbReference>
<dbReference type="HAMAP" id="MF_00076">
    <property type="entry name" value="HisB"/>
    <property type="match status" value="1"/>
</dbReference>
<dbReference type="InterPro" id="IPR038494">
    <property type="entry name" value="IGPD_sf"/>
</dbReference>
<dbReference type="InterPro" id="IPR000807">
    <property type="entry name" value="ImidazoleglycerolP_deHydtase"/>
</dbReference>
<dbReference type="InterPro" id="IPR020565">
    <property type="entry name" value="ImidazoleglycerP_deHydtase_CS"/>
</dbReference>
<dbReference type="InterPro" id="IPR020568">
    <property type="entry name" value="Ribosomal_Su5_D2-typ_SF"/>
</dbReference>
<dbReference type="NCBIfam" id="NF002111">
    <property type="entry name" value="PRK00951.2-1"/>
    <property type="match status" value="1"/>
</dbReference>
<dbReference type="NCBIfam" id="NF002113">
    <property type="entry name" value="PRK00951.2-3"/>
    <property type="match status" value="1"/>
</dbReference>
<dbReference type="NCBIfam" id="NF002114">
    <property type="entry name" value="PRK00951.2-4"/>
    <property type="match status" value="1"/>
</dbReference>
<dbReference type="PANTHER" id="PTHR23133:SF2">
    <property type="entry name" value="IMIDAZOLEGLYCEROL-PHOSPHATE DEHYDRATASE"/>
    <property type="match status" value="1"/>
</dbReference>
<dbReference type="PANTHER" id="PTHR23133">
    <property type="entry name" value="IMIDAZOLEGLYCEROL-PHOSPHATE DEHYDRATASE HIS7"/>
    <property type="match status" value="1"/>
</dbReference>
<dbReference type="Pfam" id="PF00475">
    <property type="entry name" value="IGPD"/>
    <property type="match status" value="1"/>
</dbReference>
<dbReference type="SUPFAM" id="SSF54211">
    <property type="entry name" value="Ribosomal protein S5 domain 2-like"/>
    <property type="match status" value="2"/>
</dbReference>
<dbReference type="PROSITE" id="PS00954">
    <property type="entry name" value="IGP_DEHYDRATASE_1"/>
    <property type="match status" value="1"/>
</dbReference>
<dbReference type="PROSITE" id="PS00955">
    <property type="entry name" value="IGP_DEHYDRATASE_2"/>
    <property type="match status" value="1"/>
</dbReference>
<feature type="chain" id="PRO_0000158189" description="Imidazoleglycerol-phosphate dehydratase">
    <location>
        <begin position="1"/>
        <end position="197"/>
    </location>
</feature>
<evidence type="ECO:0000255" key="1">
    <source>
        <dbReference type="HAMAP-Rule" id="MF_00076"/>
    </source>
</evidence>
<proteinExistence type="inferred from homology"/>
<protein>
    <recommendedName>
        <fullName evidence="1">Imidazoleglycerol-phosphate dehydratase</fullName>
        <shortName evidence="1">IGPD</shortName>
        <ecNumber evidence="1">4.2.1.19</ecNumber>
    </recommendedName>
</protein>
<comment type="catalytic activity">
    <reaction evidence="1">
        <text>D-erythro-1-(imidazol-4-yl)glycerol 3-phosphate = 3-(imidazol-4-yl)-2-oxopropyl phosphate + H2O</text>
        <dbReference type="Rhea" id="RHEA:11040"/>
        <dbReference type="ChEBI" id="CHEBI:15377"/>
        <dbReference type="ChEBI" id="CHEBI:57766"/>
        <dbReference type="ChEBI" id="CHEBI:58278"/>
        <dbReference type="EC" id="4.2.1.19"/>
    </reaction>
</comment>
<comment type="pathway">
    <text evidence="1">Amino-acid biosynthesis; L-histidine biosynthesis; L-histidine from 5-phospho-alpha-D-ribose 1-diphosphate: step 6/9.</text>
</comment>
<comment type="subcellular location">
    <subcellularLocation>
        <location evidence="1">Cytoplasm</location>
    </subcellularLocation>
</comment>
<comment type="similarity">
    <text evidence="1">Belongs to the imidazoleglycerol-phosphate dehydratase family.</text>
</comment>
<accession>Q58109</accession>
<organism>
    <name type="scientific">Methanocaldococcus jannaschii (strain ATCC 43067 / DSM 2661 / JAL-1 / JCM 10045 / NBRC 100440)</name>
    <name type="common">Methanococcus jannaschii</name>
    <dbReference type="NCBI Taxonomy" id="243232"/>
    <lineage>
        <taxon>Archaea</taxon>
        <taxon>Methanobacteriati</taxon>
        <taxon>Methanobacteriota</taxon>
        <taxon>Methanomada group</taxon>
        <taxon>Methanococci</taxon>
        <taxon>Methanococcales</taxon>
        <taxon>Methanocaldococcaceae</taxon>
        <taxon>Methanocaldococcus</taxon>
    </lineage>
</organism>